<accession>C0MH25</accession>
<evidence type="ECO:0000255" key="1">
    <source>
        <dbReference type="HAMAP-Rule" id="MF_00091"/>
    </source>
</evidence>
<reference key="1">
    <citation type="journal article" date="2009" name="PLoS Pathog.">
        <title>Genomic evidence for the evolution of Streptococcus equi: host restriction, increased virulence, and genetic exchange with human pathogens.</title>
        <authorList>
            <person name="Holden M.T.G."/>
            <person name="Heather Z."/>
            <person name="Paillot R."/>
            <person name="Steward K.F."/>
            <person name="Webb K."/>
            <person name="Ainslie F."/>
            <person name="Jourdan T."/>
            <person name="Bason N.C."/>
            <person name="Holroyd N.E."/>
            <person name="Mungall K."/>
            <person name="Quail M.A."/>
            <person name="Sanders M."/>
            <person name="Simmonds M."/>
            <person name="Willey D."/>
            <person name="Brooks K."/>
            <person name="Aanensen D.M."/>
            <person name="Spratt B.G."/>
            <person name="Jolley K.A."/>
            <person name="Maiden M.C.J."/>
            <person name="Kehoe M."/>
            <person name="Chanter N."/>
            <person name="Bentley S.D."/>
            <person name="Robinson C."/>
            <person name="Maskell D.J."/>
            <person name="Parkhill J."/>
            <person name="Waller A.S."/>
        </authorList>
    </citation>
    <scope>NUCLEOTIDE SEQUENCE [LARGE SCALE GENOMIC DNA]</scope>
    <source>
        <strain>H70</strain>
    </source>
</reference>
<feature type="chain" id="PRO_1000202674" description="S-ribosylhomocysteine lyase">
    <location>
        <begin position="1"/>
        <end position="161"/>
    </location>
</feature>
<feature type="binding site" evidence="1">
    <location>
        <position position="57"/>
    </location>
    <ligand>
        <name>Fe cation</name>
        <dbReference type="ChEBI" id="CHEBI:24875"/>
    </ligand>
</feature>
<feature type="binding site" evidence="1">
    <location>
        <position position="61"/>
    </location>
    <ligand>
        <name>Fe cation</name>
        <dbReference type="ChEBI" id="CHEBI:24875"/>
    </ligand>
</feature>
<feature type="binding site" evidence="1">
    <location>
        <position position="127"/>
    </location>
    <ligand>
        <name>Fe cation</name>
        <dbReference type="ChEBI" id="CHEBI:24875"/>
    </ligand>
</feature>
<comment type="function">
    <text evidence="1">Involved in the synthesis of autoinducer 2 (AI-2) which is secreted by bacteria and is used to communicate both the cell density and the metabolic potential of the environment. The regulation of gene expression in response to changes in cell density is called quorum sensing. Catalyzes the transformation of S-ribosylhomocysteine (RHC) to homocysteine (HC) and 4,5-dihydroxy-2,3-pentadione (DPD).</text>
</comment>
<comment type="catalytic activity">
    <reaction evidence="1">
        <text>S-(5-deoxy-D-ribos-5-yl)-L-homocysteine = (S)-4,5-dihydroxypentane-2,3-dione + L-homocysteine</text>
        <dbReference type="Rhea" id="RHEA:17753"/>
        <dbReference type="ChEBI" id="CHEBI:29484"/>
        <dbReference type="ChEBI" id="CHEBI:58195"/>
        <dbReference type="ChEBI" id="CHEBI:58199"/>
        <dbReference type="EC" id="4.4.1.21"/>
    </reaction>
</comment>
<comment type="cofactor">
    <cofactor evidence="1">
        <name>Fe cation</name>
        <dbReference type="ChEBI" id="CHEBI:24875"/>
    </cofactor>
    <text evidence="1">Binds 1 Fe cation per subunit.</text>
</comment>
<comment type="subunit">
    <text evidence="1">Homodimer.</text>
</comment>
<comment type="similarity">
    <text evidence="1">Belongs to the LuxS family.</text>
</comment>
<organism>
    <name type="scientific">Streptococcus equi subsp. zooepidemicus (strain H70)</name>
    <dbReference type="NCBI Taxonomy" id="553483"/>
    <lineage>
        <taxon>Bacteria</taxon>
        <taxon>Bacillati</taxon>
        <taxon>Bacillota</taxon>
        <taxon>Bacilli</taxon>
        <taxon>Lactobacillales</taxon>
        <taxon>Streptococcaceae</taxon>
        <taxon>Streptococcus</taxon>
    </lineage>
</organism>
<keyword id="KW-0071">Autoinducer synthesis</keyword>
<keyword id="KW-0408">Iron</keyword>
<keyword id="KW-0456">Lyase</keyword>
<keyword id="KW-0479">Metal-binding</keyword>
<keyword id="KW-0673">Quorum sensing</keyword>
<proteinExistence type="inferred from homology"/>
<sequence length="161" mass="17947">MPKEVIVESFELDHTIVKAPYVRLISEEFGPKGDVITNFDVRLVQPNQAAIETAGLHTIEHLLAKLIRQRIDGMIDCSPFGCRTGFHLIMWGKHSSTDIAKVITSSLEEIATGITWEDVPGTTIESCGNYKDHSLFAAKEWAQLILKQGISDDPFNRHVTS</sequence>
<protein>
    <recommendedName>
        <fullName evidence="1">S-ribosylhomocysteine lyase</fullName>
        <ecNumber evidence="1">4.4.1.21</ecNumber>
    </recommendedName>
    <alternativeName>
        <fullName evidence="1">AI-2 synthesis protein</fullName>
    </alternativeName>
    <alternativeName>
        <fullName evidence="1">Autoinducer-2 production protein LuxS</fullName>
    </alternativeName>
</protein>
<dbReference type="EC" id="4.4.1.21" evidence="1"/>
<dbReference type="EMBL" id="FM204884">
    <property type="protein sequence ID" value="CAW98284.1"/>
    <property type="molecule type" value="Genomic_DNA"/>
</dbReference>
<dbReference type="SMR" id="C0MH25"/>
<dbReference type="KEGG" id="seq:SZO_04010"/>
<dbReference type="eggNOG" id="COG1854">
    <property type="taxonomic scope" value="Bacteria"/>
</dbReference>
<dbReference type="HOGENOM" id="CLU_107531_2_1_9"/>
<dbReference type="Proteomes" id="UP000001368">
    <property type="component" value="Chromosome"/>
</dbReference>
<dbReference type="GO" id="GO:0005506">
    <property type="term" value="F:iron ion binding"/>
    <property type="evidence" value="ECO:0007669"/>
    <property type="project" value="InterPro"/>
</dbReference>
<dbReference type="GO" id="GO:0043768">
    <property type="term" value="F:S-ribosylhomocysteine lyase activity"/>
    <property type="evidence" value="ECO:0007669"/>
    <property type="project" value="UniProtKB-UniRule"/>
</dbReference>
<dbReference type="GO" id="GO:0009372">
    <property type="term" value="P:quorum sensing"/>
    <property type="evidence" value="ECO:0007669"/>
    <property type="project" value="UniProtKB-UniRule"/>
</dbReference>
<dbReference type="Gene3D" id="3.30.1360.80">
    <property type="entry name" value="S-ribosylhomocysteinase (LuxS)"/>
    <property type="match status" value="1"/>
</dbReference>
<dbReference type="HAMAP" id="MF_00091">
    <property type="entry name" value="LuxS"/>
    <property type="match status" value="1"/>
</dbReference>
<dbReference type="InterPro" id="IPR037005">
    <property type="entry name" value="LuxS_sf"/>
</dbReference>
<dbReference type="InterPro" id="IPR011249">
    <property type="entry name" value="Metalloenz_LuxS/M16"/>
</dbReference>
<dbReference type="InterPro" id="IPR003815">
    <property type="entry name" value="S-ribosylhomocysteinase"/>
</dbReference>
<dbReference type="NCBIfam" id="NF002607">
    <property type="entry name" value="PRK02260.2-5"/>
    <property type="match status" value="1"/>
</dbReference>
<dbReference type="NCBIfam" id="NF002608">
    <property type="entry name" value="PRK02260.3-1"/>
    <property type="match status" value="1"/>
</dbReference>
<dbReference type="PANTHER" id="PTHR35799">
    <property type="entry name" value="S-RIBOSYLHOMOCYSTEINE LYASE"/>
    <property type="match status" value="1"/>
</dbReference>
<dbReference type="PANTHER" id="PTHR35799:SF1">
    <property type="entry name" value="S-RIBOSYLHOMOCYSTEINE LYASE"/>
    <property type="match status" value="1"/>
</dbReference>
<dbReference type="Pfam" id="PF02664">
    <property type="entry name" value="LuxS"/>
    <property type="match status" value="1"/>
</dbReference>
<dbReference type="PIRSF" id="PIRSF006160">
    <property type="entry name" value="AI2"/>
    <property type="match status" value="1"/>
</dbReference>
<dbReference type="PRINTS" id="PR01487">
    <property type="entry name" value="LUXSPROTEIN"/>
</dbReference>
<dbReference type="SUPFAM" id="SSF63411">
    <property type="entry name" value="LuxS/MPP-like metallohydrolase"/>
    <property type="match status" value="1"/>
</dbReference>
<name>LUXS_STRS7</name>
<gene>
    <name evidence="1" type="primary">luxS</name>
    <name type="ordered locus">SZO_04010</name>
</gene>